<evidence type="ECO:0000255" key="1">
    <source>
        <dbReference type="HAMAP-Rule" id="MF_02003"/>
    </source>
</evidence>
<name>SYI_META3</name>
<gene>
    <name evidence="1" type="primary">ileS</name>
    <name type="ordered locus">Maeo_0945</name>
</gene>
<reference key="1">
    <citation type="submission" date="2007-06" db="EMBL/GenBank/DDBJ databases">
        <title>Complete sequence of Methanococcus aeolicus Nankai-3.</title>
        <authorList>
            <consortium name="US DOE Joint Genome Institute"/>
            <person name="Copeland A."/>
            <person name="Lucas S."/>
            <person name="Lapidus A."/>
            <person name="Barry K."/>
            <person name="Glavina del Rio T."/>
            <person name="Dalin E."/>
            <person name="Tice H."/>
            <person name="Pitluck S."/>
            <person name="Chain P."/>
            <person name="Malfatti S."/>
            <person name="Shin M."/>
            <person name="Vergez L."/>
            <person name="Schmutz J."/>
            <person name="Larimer F."/>
            <person name="Land M."/>
            <person name="Hauser L."/>
            <person name="Kyrpides N."/>
            <person name="Lykidis A."/>
            <person name="Sieprawska-Lupa M."/>
            <person name="Whitman W.B."/>
            <person name="Richardson P."/>
        </authorList>
    </citation>
    <scope>NUCLEOTIDE SEQUENCE [LARGE SCALE GENOMIC DNA]</scope>
    <source>
        <strain>ATCC BAA-1280 / DSM 17508 / OCM 812 / Nankai-3</strain>
    </source>
</reference>
<organism>
    <name type="scientific">Methanococcus aeolicus (strain ATCC BAA-1280 / DSM 17508 / OCM 812 / Nankai-3)</name>
    <dbReference type="NCBI Taxonomy" id="419665"/>
    <lineage>
        <taxon>Archaea</taxon>
        <taxon>Methanobacteriati</taxon>
        <taxon>Methanobacteriota</taxon>
        <taxon>Methanomada group</taxon>
        <taxon>Methanococci</taxon>
        <taxon>Methanococcales</taxon>
        <taxon>Methanococcaceae</taxon>
        <taxon>Methanococcus</taxon>
    </lineage>
</organism>
<accession>A6UVK2</accession>
<dbReference type="EC" id="6.1.1.5" evidence="1"/>
<dbReference type="EMBL" id="CP000743">
    <property type="protein sequence ID" value="ABR56524.1"/>
    <property type="molecule type" value="Genomic_DNA"/>
</dbReference>
<dbReference type="RefSeq" id="WP_011973656.1">
    <property type="nucleotide sequence ID" value="NC_009635.1"/>
</dbReference>
<dbReference type="SMR" id="A6UVK2"/>
<dbReference type="STRING" id="419665.Maeo_0945"/>
<dbReference type="GeneID" id="5327661"/>
<dbReference type="KEGG" id="mae:Maeo_0945"/>
<dbReference type="eggNOG" id="arCOG00807">
    <property type="taxonomic scope" value="Archaea"/>
</dbReference>
<dbReference type="HOGENOM" id="CLU_001493_1_1_2"/>
<dbReference type="OrthoDB" id="30823at2157"/>
<dbReference type="Proteomes" id="UP000001106">
    <property type="component" value="Chromosome"/>
</dbReference>
<dbReference type="GO" id="GO:0005737">
    <property type="term" value="C:cytoplasm"/>
    <property type="evidence" value="ECO:0007669"/>
    <property type="project" value="UniProtKB-SubCell"/>
</dbReference>
<dbReference type="GO" id="GO:0002161">
    <property type="term" value="F:aminoacyl-tRNA deacylase activity"/>
    <property type="evidence" value="ECO:0007669"/>
    <property type="project" value="InterPro"/>
</dbReference>
<dbReference type="GO" id="GO:0005524">
    <property type="term" value="F:ATP binding"/>
    <property type="evidence" value="ECO:0007669"/>
    <property type="project" value="UniProtKB-UniRule"/>
</dbReference>
<dbReference type="GO" id="GO:0004822">
    <property type="term" value="F:isoleucine-tRNA ligase activity"/>
    <property type="evidence" value="ECO:0007669"/>
    <property type="project" value="UniProtKB-UniRule"/>
</dbReference>
<dbReference type="GO" id="GO:0000049">
    <property type="term" value="F:tRNA binding"/>
    <property type="evidence" value="ECO:0007669"/>
    <property type="project" value="InterPro"/>
</dbReference>
<dbReference type="GO" id="GO:0008270">
    <property type="term" value="F:zinc ion binding"/>
    <property type="evidence" value="ECO:0007669"/>
    <property type="project" value="UniProtKB-UniRule"/>
</dbReference>
<dbReference type="GO" id="GO:0006428">
    <property type="term" value="P:isoleucyl-tRNA aminoacylation"/>
    <property type="evidence" value="ECO:0007669"/>
    <property type="project" value="UniProtKB-UniRule"/>
</dbReference>
<dbReference type="CDD" id="cd07961">
    <property type="entry name" value="Anticodon_Ia_Ile_ABEc"/>
    <property type="match status" value="1"/>
</dbReference>
<dbReference type="CDD" id="cd00818">
    <property type="entry name" value="IleRS_core"/>
    <property type="match status" value="1"/>
</dbReference>
<dbReference type="Gene3D" id="3.40.50.620">
    <property type="entry name" value="HUPs"/>
    <property type="match status" value="2"/>
</dbReference>
<dbReference type="Gene3D" id="1.10.730.10">
    <property type="entry name" value="Isoleucyl-tRNA Synthetase, Domain 1"/>
    <property type="match status" value="1"/>
</dbReference>
<dbReference type="HAMAP" id="MF_02003">
    <property type="entry name" value="Ile_tRNA_synth_type2"/>
    <property type="match status" value="1"/>
</dbReference>
<dbReference type="InterPro" id="IPR001412">
    <property type="entry name" value="aa-tRNA-synth_I_CS"/>
</dbReference>
<dbReference type="InterPro" id="IPR002300">
    <property type="entry name" value="aa-tRNA-synth_Ia"/>
</dbReference>
<dbReference type="InterPro" id="IPR033709">
    <property type="entry name" value="Anticodon_Ile_ABEc"/>
</dbReference>
<dbReference type="InterPro" id="IPR002301">
    <property type="entry name" value="Ile-tRNA-ligase"/>
</dbReference>
<dbReference type="InterPro" id="IPR023586">
    <property type="entry name" value="Ile-tRNA-ligase_type2"/>
</dbReference>
<dbReference type="InterPro" id="IPR013155">
    <property type="entry name" value="M/V/L/I-tRNA-synth_anticd-bd"/>
</dbReference>
<dbReference type="InterPro" id="IPR014729">
    <property type="entry name" value="Rossmann-like_a/b/a_fold"/>
</dbReference>
<dbReference type="InterPro" id="IPR009080">
    <property type="entry name" value="tRNAsynth_Ia_anticodon-bd"/>
</dbReference>
<dbReference type="InterPro" id="IPR009008">
    <property type="entry name" value="Val/Leu/Ile-tRNA-synth_edit"/>
</dbReference>
<dbReference type="NCBIfam" id="TIGR00392">
    <property type="entry name" value="ileS"/>
    <property type="match status" value="1"/>
</dbReference>
<dbReference type="PANTHER" id="PTHR42780:SF1">
    <property type="entry name" value="ISOLEUCINE--TRNA LIGASE, CYTOPLASMIC"/>
    <property type="match status" value="1"/>
</dbReference>
<dbReference type="PANTHER" id="PTHR42780">
    <property type="entry name" value="SOLEUCYL-TRNA SYNTHETASE"/>
    <property type="match status" value="1"/>
</dbReference>
<dbReference type="Pfam" id="PF08264">
    <property type="entry name" value="Anticodon_1"/>
    <property type="match status" value="1"/>
</dbReference>
<dbReference type="Pfam" id="PF19302">
    <property type="entry name" value="DUF5915"/>
    <property type="match status" value="1"/>
</dbReference>
<dbReference type="Pfam" id="PF00133">
    <property type="entry name" value="tRNA-synt_1"/>
    <property type="match status" value="1"/>
</dbReference>
<dbReference type="PRINTS" id="PR00984">
    <property type="entry name" value="TRNASYNTHILE"/>
</dbReference>
<dbReference type="SUPFAM" id="SSF47323">
    <property type="entry name" value="Anticodon-binding domain of a subclass of class I aminoacyl-tRNA synthetases"/>
    <property type="match status" value="1"/>
</dbReference>
<dbReference type="SUPFAM" id="SSF52374">
    <property type="entry name" value="Nucleotidylyl transferase"/>
    <property type="match status" value="1"/>
</dbReference>
<dbReference type="SUPFAM" id="SSF50677">
    <property type="entry name" value="ValRS/IleRS/LeuRS editing domain"/>
    <property type="match status" value="1"/>
</dbReference>
<dbReference type="PROSITE" id="PS00178">
    <property type="entry name" value="AA_TRNA_LIGASE_I"/>
    <property type="match status" value="1"/>
</dbReference>
<feature type="chain" id="PRO_1000022150" description="Isoleucine--tRNA ligase">
    <location>
        <begin position="1"/>
        <end position="1040"/>
    </location>
</feature>
<feature type="short sequence motif" description="'HIGH' region">
    <location>
        <begin position="47"/>
        <end position="57"/>
    </location>
</feature>
<feature type="short sequence motif" description="'KMSKS' region">
    <location>
        <begin position="605"/>
        <end position="609"/>
    </location>
</feature>
<feature type="binding site" evidence="1">
    <location>
        <position position="608"/>
    </location>
    <ligand>
        <name>ATP</name>
        <dbReference type="ChEBI" id="CHEBI:30616"/>
    </ligand>
</feature>
<proteinExistence type="inferred from homology"/>
<protein>
    <recommendedName>
        <fullName evidence="1">Isoleucine--tRNA ligase</fullName>
        <ecNumber evidence="1">6.1.1.5</ecNumber>
    </recommendedName>
    <alternativeName>
        <fullName evidence="1">Isoleucyl-tRNA synthetase</fullName>
        <shortName evidence="1">IleRS</shortName>
    </alternativeName>
</protein>
<keyword id="KW-0030">Aminoacyl-tRNA synthetase</keyword>
<keyword id="KW-0067">ATP-binding</keyword>
<keyword id="KW-0963">Cytoplasm</keyword>
<keyword id="KW-0436">Ligase</keyword>
<keyword id="KW-0479">Metal-binding</keyword>
<keyword id="KW-0547">Nucleotide-binding</keyword>
<keyword id="KW-0648">Protein biosynthesis</keyword>
<keyword id="KW-0862">Zinc</keyword>
<sequence>MKEIKGKVDFREMDKEIKEFWENNEIYQKVKKLNENYPDYYFVDGPPYCSGSIHLGTAWNKTIKDTVLRFKRMQNYNVLDKAGWDMHGLPIEVKVEHEFNLQSKKDIETKVGTDVFIEKCKEFALNNKEVMENQFKNLGIWLDWENAYLPIKNDYIEAGWWSLKRAHEKELLSKDLRVGYWCPRCETSLAEHEVRGEYQDVLDPSVYVKFKVADDNSYPNTYFVIWTTTPWTLISNLLIAVNPEFDYGFVEVIFDNERKETWVIAEALVEAVIKLAKKQNNIKSYNIVKKVKGKELEGIKYVPALLEENERQKEFFQLEKVHTIVLGEHVSLDGGTGLVHTAPGFGEEDFEVGKKYNSPIYSPIDDEGKYVEGKWKGVFVKDADEDIIATLTDKNLIVNAGKKKHTYPHCWRCKTPLLFRSTEQWFLNISKIKNNIVEHAKNTDWVPNWVETRYINGVKFVGDWNISRQRYWGIPLPIWICENKDCGKYKIIGSVEELKQEMINDIPINDDLHKPTVDKIIMKCDCGCEMKRTPDVLDVWYDSGLAPYASINAKELKKADFIVEGNDQVTKWFYSQHALSEIVFDDIPYKKCMMHGFTLDETGEKMSKSIGNVVNPDDVVEEFGADLLRFYLLSANKAWEDLRFSIGEMNDVKSVFNTLWNSYSFAVNYMVLDDFSPNEEYFNYLRDEDKWIISKINSLTKEAIEVLEIPHLHEYTWKVRDFILNDLSRWYIKLIRNRTWMEKEDPDKLSAYQTLYYVLMKLVVILAPVAPHISEKIYQNLKIEGMPQSIFMTKIVVEEEYINKEVEEGIETAREIVDAILKGRDKVKYTLRYPISKIILPNELGDIVNKYHYIIKEQGNVKNIEVKEFEGNISLKPNFRTLGASFKSDVPAVVKILNSQNPKELKDKLAEGEITIDGFTIKPEHVEFKIDIPDNIVGMELRKGSVYIDIELTEEIIKDGLKREVIRRIQSMRKDMDLDIEEKIKITMEGIEFNEDALKDIEKEVRGTFEPTIECDNIQEWNIKTPNGEVYNLKIGVKKN</sequence>
<comment type="function">
    <text evidence="1">Catalyzes the attachment of isoleucine to tRNA(Ile). As IleRS can inadvertently accommodate and process structurally similar amino acids such as valine, to avoid such errors it has two additional distinct tRNA(Ile)-dependent editing activities. One activity is designated as 'pretransfer' editing and involves the hydrolysis of activated Val-AMP. The other activity is designated 'posttransfer' editing and involves deacylation of mischarged Val-tRNA(Ile).</text>
</comment>
<comment type="catalytic activity">
    <reaction evidence="1">
        <text>tRNA(Ile) + L-isoleucine + ATP = L-isoleucyl-tRNA(Ile) + AMP + diphosphate</text>
        <dbReference type="Rhea" id="RHEA:11060"/>
        <dbReference type="Rhea" id="RHEA-COMP:9666"/>
        <dbReference type="Rhea" id="RHEA-COMP:9695"/>
        <dbReference type="ChEBI" id="CHEBI:30616"/>
        <dbReference type="ChEBI" id="CHEBI:33019"/>
        <dbReference type="ChEBI" id="CHEBI:58045"/>
        <dbReference type="ChEBI" id="CHEBI:78442"/>
        <dbReference type="ChEBI" id="CHEBI:78528"/>
        <dbReference type="ChEBI" id="CHEBI:456215"/>
        <dbReference type="EC" id="6.1.1.5"/>
    </reaction>
</comment>
<comment type="cofactor">
    <cofactor evidence="1">
        <name>Zn(2+)</name>
        <dbReference type="ChEBI" id="CHEBI:29105"/>
    </cofactor>
</comment>
<comment type="subunit">
    <text evidence="1">Monomer.</text>
</comment>
<comment type="subcellular location">
    <subcellularLocation>
        <location evidence="1">Cytoplasm</location>
    </subcellularLocation>
</comment>
<comment type="domain">
    <text evidence="1">IleRS has two distinct active sites: one for aminoacylation and one for editing. The misactivated valine is translocated from the active site to the editing site, which sterically excludes the correctly activated isoleucine. The single editing site contains two valyl binding pockets, one specific for each substrate (Val-AMP or Val-tRNA(Ile)).</text>
</comment>
<comment type="similarity">
    <text evidence="1">Belongs to the class-I aminoacyl-tRNA synthetase family. IleS type 2 subfamily.</text>
</comment>